<reference key="1">
    <citation type="submission" date="2007-11" db="EMBL/GenBank/DDBJ databases">
        <authorList>
            <consortium name="The Salmonella enterica serovar Arizonae Genome Sequencing Project"/>
            <person name="McClelland M."/>
            <person name="Sanderson E.K."/>
            <person name="Porwollik S."/>
            <person name="Spieth J."/>
            <person name="Clifton W.S."/>
            <person name="Fulton R."/>
            <person name="Chunyan W."/>
            <person name="Wollam A."/>
            <person name="Shah N."/>
            <person name="Pepin K."/>
            <person name="Bhonagiri V."/>
            <person name="Nash W."/>
            <person name="Johnson M."/>
            <person name="Thiruvilangam P."/>
            <person name="Wilson R."/>
        </authorList>
    </citation>
    <scope>NUCLEOTIDE SEQUENCE [LARGE SCALE GENOMIC DNA]</scope>
    <source>
        <strain>ATCC BAA-731 / CDC346-86 / RSK2980</strain>
    </source>
</reference>
<dbReference type="EC" id="6.1.1.14" evidence="1"/>
<dbReference type="EMBL" id="CP000880">
    <property type="protein sequence ID" value="ABX23775.1"/>
    <property type="molecule type" value="Genomic_DNA"/>
</dbReference>
<dbReference type="SMR" id="A9MLF6"/>
<dbReference type="STRING" id="41514.SARI_03981"/>
<dbReference type="KEGG" id="ses:SARI_03981"/>
<dbReference type="HOGENOM" id="CLU_057066_1_0_6"/>
<dbReference type="Proteomes" id="UP000002084">
    <property type="component" value="Chromosome"/>
</dbReference>
<dbReference type="GO" id="GO:0005829">
    <property type="term" value="C:cytosol"/>
    <property type="evidence" value="ECO:0007669"/>
    <property type="project" value="TreeGrafter"/>
</dbReference>
<dbReference type="GO" id="GO:0005524">
    <property type="term" value="F:ATP binding"/>
    <property type="evidence" value="ECO:0007669"/>
    <property type="project" value="UniProtKB-UniRule"/>
</dbReference>
<dbReference type="GO" id="GO:0004820">
    <property type="term" value="F:glycine-tRNA ligase activity"/>
    <property type="evidence" value="ECO:0007669"/>
    <property type="project" value="UniProtKB-UniRule"/>
</dbReference>
<dbReference type="GO" id="GO:0006426">
    <property type="term" value="P:glycyl-tRNA aminoacylation"/>
    <property type="evidence" value="ECO:0007669"/>
    <property type="project" value="UniProtKB-UniRule"/>
</dbReference>
<dbReference type="CDD" id="cd00733">
    <property type="entry name" value="GlyRS_alpha_core"/>
    <property type="match status" value="1"/>
</dbReference>
<dbReference type="FunFam" id="1.20.58.180:FF:000001">
    <property type="entry name" value="Glycine--tRNA ligase alpha subunit"/>
    <property type="match status" value="1"/>
</dbReference>
<dbReference type="FunFam" id="3.30.930.10:FF:000006">
    <property type="entry name" value="Glycine--tRNA ligase alpha subunit"/>
    <property type="match status" value="1"/>
</dbReference>
<dbReference type="Gene3D" id="3.30.930.10">
    <property type="entry name" value="Bira Bifunctional Protein, Domain 2"/>
    <property type="match status" value="1"/>
</dbReference>
<dbReference type="Gene3D" id="1.20.58.180">
    <property type="entry name" value="Class II aaRS and biotin synthetases, domain 2"/>
    <property type="match status" value="1"/>
</dbReference>
<dbReference type="HAMAP" id="MF_00254">
    <property type="entry name" value="Gly_tRNA_synth_alpha"/>
    <property type="match status" value="1"/>
</dbReference>
<dbReference type="InterPro" id="IPR045864">
    <property type="entry name" value="aa-tRNA-synth_II/BPL/LPL"/>
</dbReference>
<dbReference type="InterPro" id="IPR006194">
    <property type="entry name" value="Gly-tRNA-synth_heterodimer"/>
</dbReference>
<dbReference type="InterPro" id="IPR002310">
    <property type="entry name" value="Gly-tRNA_ligase_asu"/>
</dbReference>
<dbReference type="NCBIfam" id="TIGR00388">
    <property type="entry name" value="glyQ"/>
    <property type="match status" value="1"/>
</dbReference>
<dbReference type="NCBIfam" id="NF006827">
    <property type="entry name" value="PRK09348.1"/>
    <property type="match status" value="1"/>
</dbReference>
<dbReference type="PANTHER" id="PTHR30075:SF2">
    <property type="entry name" value="GLYCINE--TRNA LIGASE, CHLOROPLASTIC_MITOCHONDRIAL 2"/>
    <property type="match status" value="1"/>
</dbReference>
<dbReference type="PANTHER" id="PTHR30075">
    <property type="entry name" value="GLYCYL-TRNA SYNTHETASE"/>
    <property type="match status" value="1"/>
</dbReference>
<dbReference type="Pfam" id="PF02091">
    <property type="entry name" value="tRNA-synt_2e"/>
    <property type="match status" value="1"/>
</dbReference>
<dbReference type="PRINTS" id="PR01044">
    <property type="entry name" value="TRNASYNTHGA"/>
</dbReference>
<dbReference type="SUPFAM" id="SSF55681">
    <property type="entry name" value="Class II aaRS and biotin synthetases"/>
    <property type="match status" value="1"/>
</dbReference>
<dbReference type="PROSITE" id="PS50861">
    <property type="entry name" value="AA_TRNA_LIGASE_II_GLYAB"/>
    <property type="match status" value="1"/>
</dbReference>
<sequence length="303" mass="34774">MQKFDTRTFQGLILTLQDYWARQGCTIVQPLDMEVGAGTSHPMTCLRALGPEPMATAYVQPSRRPTDGRYGENPNRLQHYYQFQVVIKPSPENIQELYLGSLKELGMDPTIHDIRFVEDNWENPTLGAWGLGWEVWLNGMEVTQFTYFQQVGGLECKPVTGEITYGLERLAMYIQGVDSVYDLVWSDGPLGKTTYGDVFHQNEVEQSTYNFEYADVDFLFTCFEQYEKEAQQLLALENPLPLPAYERILKAAHSFNLLDARKAISVTERQRYILRIRTLTKAVAEAYYASREALGFPMCNKEK</sequence>
<proteinExistence type="inferred from homology"/>
<keyword id="KW-0030">Aminoacyl-tRNA synthetase</keyword>
<keyword id="KW-0067">ATP-binding</keyword>
<keyword id="KW-0963">Cytoplasm</keyword>
<keyword id="KW-0436">Ligase</keyword>
<keyword id="KW-0547">Nucleotide-binding</keyword>
<keyword id="KW-0648">Protein biosynthesis</keyword>
<keyword id="KW-1185">Reference proteome</keyword>
<accession>A9MLF6</accession>
<protein>
    <recommendedName>
        <fullName evidence="1">Glycine--tRNA ligase alpha subunit</fullName>
        <ecNumber evidence="1">6.1.1.14</ecNumber>
    </recommendedName>
    <alternativeName>
        <fullName evidence="1">Glycyl-tRNA synthetase alpha subunit</fullName>
        <shortName evidence="1">GlyRS</shortName>
    </alternativeName>
</protein>
<evidence type="ECO:0000255" key="1">
    <source>
        <dbReference type="HAMAP-Rule" id="MF_00254"/>
    </source>
</evidence>
<gene>
    <name evidence="1" type="primary">glyQ</name>
    <name type="ordered locus">SARI_03981</name>
</gene>
<organism>
    <name type="scientific">Salmonella arizonae (strain ATCC BAA-731 / CDC346-86 / RSK2980)</name>
    <dbReference type="NCBI Taxonomy" id="41514"/>
    <lineage>
        <taxon>Bacteria</taxon>
        <taxon>Pseudomonadati</taxon>
        <taxon>Pseudomonadota</taxon>
        <taxon>Gammaproteobacteria</taxon>
        <taxon>Enterobacterales</taxon>
        <taxon>Enterobacteriaceae</taxon>
        <taxon>Salmonella</taxon>
    </lineage>
</organism>
<feature type="chain" id="PRO_1000078534" description="Glycine--tRNA ligase alpha subunit">
    <location>
        <begin position="1"/>
        <end position="303"/>
    </location>
</feature>
<name>SYGA_SALAR</name>
<comment type="catalytic activity">
    <reaction evidence="1">
        <text>tRNA(Gly) + glycine + ATP = glycyl-tRNA(Gly) + AMP + diphosphate</text>
        <dbReference type="Rhea" id="RHEA:16013"/>
        <dbReference type="Rhea" id="RHEA-COMP:9664"/>
        <dbReference type="Rhea" id="RHEA-COMP:9683"/>
        <dbReference type="ChEBI" id="CHEBI:30616"/>
        <dbReference type="ChEBI" id="CHEBI:33019"/>
        <dbReference type="ChEBI" id="CHEBI:57305"/>
        <dbReference type="ChEBI" id="CHEBI:78442"/>
        <dbReference type="ChEBI" id="CHEBI:78522"/>
        <dbReference type="ChEBI" id="CHEBI:456215"/>
        <dbReference type="EC" id="6.1.1.14"/>
    </reaction>
</comment>
<comment type="subunit">
    <text evidence="1">Tetramer of two alpha and two beta subunits.</text>
</comment>
<comment type="subcellular location">
    <subcellularLocation>
        <location evidence="1">Cytoplasm</location>
    </subcellularLocation>
</comment>
<comment type="similarity">
    <text evidence="1">Belongs to the class-II aminoacyl-tRNA synthetase family.</text>
</comment>